<evidence type="ECO:0000255" key="1">
    <source>
        <dbReference type="HAMAP-Rule" id="MF_00744"/>
    </source>
</evidence>
<gene>
    <name evidence="1" type="primary">metJ</name>
    <name type="ordered locus">E2348C_4242</name>
</gene>
<feature type="chain" id="PRO_1000148312" description="Met repressor">
    <location>
        <begin position="1"/>
        <end position="105"/>
    </location>
</feature>
<accession>B7UNQ8</accession>
<comment type="function">
    <text evidence="1">This regulatory protein, when combined with SAM (S-adenosylmethionine) represses the expression of the methionine regulon and of enzymes involved in SAM synthesis.</text>
</comment>
<comment type="subunit">
    <text evidence="1">Homodimer.</text>
</comment>
<comment type="subcellular location">
    <subcellularLocation>
        <location evidence="1">Cytoplasm</location>
    </subcellularLocation>
</comment>
<comment type="domain">
    <text>Does not bind DNA by a helix-turn-helix motif.</text>
</comment>
<comment type="similarity">
    <text evidence="1">Belongs to the MetJ family.</text>
</comment>
<dbReference type="EMBL" id="FM180568">
    <property type="protein sequence ID" value="CAS11790.1"/>
    <property type="molecule type" value="Genomic_DNA"/>
</dbReference>
<dbReference type="RefSeq" id="WP_000852812.1">
    <property type="nucleotide sequence ID" value="NC_011601.1"/>
</dbReference>
<dbReference type="SMR" id="B7UNQ8"/>
<dbReference type="GeneID" id="93777954"/>
<dbReference type="KEGG" id="ecg:E2348C_4242"/>
<dbReference type="HOGENOM" id="CLU_142318_0_0_6"/>
<dbReference type="Proteomes" id="UP000008205">
    <property type="component" value="Chromosome"/>
</dbReference>
<dbReference type="GO" id="GO:0005737">
    <property type="term" value="C:cytoplasm"/>
    <property type="evidence" value="ECO:0007669"/>
    <property type="project" value="UniProtKB-SubCell"/>
</dbReference>
<dbReference type="GO" id="GO:0003677">
    <property type="term" value="F:DNA binding"/>
    <property type="evidence" value="ECO:0007669"/>
    <property type="project" value="UniProtKB-KW"/>
</dbReference>
<dbReference type="GO" id="GO:0003700">
    <property type="term" value="F:DNA-binding transcription factor activity"/>
    <property type="evidence" value="ECO:0007669"/>
    <property type="project" value="InterPro"/>
</dbReference>
<dbReference type="GO" id="GO:0009086">
    <property type="term" value="P:methionine biosynthetic process"/>
    <property type="evidence" value="ECO:0007669"/>
    <property type="project" value="UniProtKB-UniRule"/>
</dbReference>
<dbReference type="GO" id="GO:0045892">
    <property type="term" value="P:negative regulation of DNA-templated transcription"/>
    <property type="evidence" value="ECO:0007669"/>
    <property type="project" value="UniProtKB-UniRule"/>
</dbReference>
<dbReference type="CDD" id="cd00490">
    <property type="entry name" value="Met_repressor_MetJ"/>
    <property type="match status" value="1"/>
</dbReference>
<dbReference type="FunFam" id="1.10.140.10:FF:000001">
    <property type="entry name" value="Met repressor"/>
    <property type="match status" value="1"/>
</dbReference>
<dbReference type="Gene3D" id="1.10.140.10">
    <property type="entry name" value="MET Apo-Repressor, subunit A"/>
    <property type="match status" value="1"/>
</dbReference>
<dbReference type="HAMAP" id="MF_00744">
    <property type="entry name" value="MetJ"/>
    <property type="match status" value="1"/>
</dbReference>
<dbReference type="InterPro" id="IPR002084">
    <property type="entry name" value="Met_repressor_MetJ"/>
</dbReference>
<dbReference type="InterPro" id="IPR023453">
    <property type="entry name" value="Met_repressor_MetJ_dom_sf"/>
</dbReference>
<dbReference type="InterPro" id="IPR010985">
    <property type="entry name" value="Ribbon_hlx_hlx"/>
</dbReference>
<dbReference type="NCBIfam" id="NF003622">
    <property type="entry name" value="PRK05264.1"/>
    <property type="match status" value="1"/>
</dbReference>
<dbReference type="Pfam" id="PF01340">
    <property type="entry name" value="MetJ"/>
    <property type="match status" value="1"/>
</dbReference>
<dbReference type="SUPFAM" id="SSF47598">
    <property type="entry name" value="Ribbon-helix-helix"/>
    <property type="match status" value="1"/>
</dbReference>
<reference key="1">
    <citation type="journal article" date="2009" name="J. Bacteriol.">
        <title>Complete genome sequence and comparative genome analysis of enteropathogenic Escherichia coli O127:H6 strain E2348/69.</title>
        <authorList>
            <person name="Iguchi A."/>
            <person name="Thomson N.R."/>
            <person name="Ogura Y."/>
            <person name="Saunders D."/>
            <person name="Ooka T."/>
            <person name="Henderson I.R."/>
            <person name="Harris D."/>
            <person name="Asadulghani M."/>
            <person name="Kurokawa K."/>
            <person name="Dean P."/>
            <person name="Kenny B."/>
            <person name="Quail M.A."/>
            <person name="Thurston S."/>
            <person name="Dougan G."/>
            <person name="Hayashi T."/>
            <person name="Parkhill J."/>
            <person name="Frankel G."/>
        </authorList>
    </citation>
    <scope>NUCLEOTIDE SEQUENCE [LARGE SCALE GENOMIC DNA]</scope>
    <source>
        <strain>E2348/69 / EPEC</strain>
    </source>
</reference>
<proteinExistence type="inferred from homology"/>
<name>METJ_ECO27</name>
<protein>
    <recommendedName>
        <fullName evidence="1">Met repressor</fullName>
    </recommendedName>
    <alternativeName>
        <fullName evidence="1">Met regulon regulatory protein MetJ</fullName>
    </alternativeName>
</protein>
<organism>
    <name type="scientific">Escherichia coli O127:H6 (strain E2348/69 / EPEC)</name>
    <dbReference type="NCBI Taxonomy" id="574521"/>
    <lineage>
        <taxon>Bacteria</taxon>
        <taxon>Pseudomonadati</taxon>
        <taxon>Pseudomonadota</taxon>
        <taxon>Gammaproteobacteria</taxon>
        <taxon>Enterobacterales</taxon>
        <taxon>Enterobacteriaceae</taxon>
        <taxon>Escherichia</taxon>
    </lineage>
</organism>
<sequence length="105" mass="12141">MAEWSGEYISPYAEHGKKSEQVKKITVSIPLKVLKILTDERTRRQVNNLRHATNSELLCEAFLHAFTGQPLPDDADLRKERSDEIPEAAKEIMREMGINPETWEY</sequence>
<keyword id="KW-0028">Amino-acid biosynthesis</keyword>
<keyword id="KW-0963">Cytoplasm</keyword>
<keyword id="KW-0238">DNA-binding</keyword>
<keyword id="KW-0486">Methionine biosynthesis</keyword>
<keyword id="KW-1185">Reference proteome</keyword>
<keyword id="KW-0678">Repressor</keyword>
<keyword id="KW-0804">Transcription</keyword>
<keyword id="KW-0805">Transcription regulation</keyword>